<feature type="chain" id="PRO_0000390272" description="NADH-quinone oxidoreductase subunit K">
    <location>
        <begin position="1"/>
        <end position="101"/>
    </location>
</feature>
<feature type="transmembrane region" description="Helical" evidence="1">
    <location>
        <begin position="4"/>
        <end position="24"/>
    </location>
</feature>
<feature type="transmembrane region" description="Helical" evidence="1">
    <location>
        <begin position="30"/>
        <end position="50"/>
    </location>
</feature>
<feature type="transmembrane region" description="Helical" evidence="1">
    <location>
        <begin position="62"/>
        <end position="82"/>
    </location>
</feature>
<reference key="1">
    <citation type="journal article" date="2002" name="Nature">
        <title>Comparison of the genomes of two Xanthomonas pathogens with differing host specificities.</title>
        <authorList>
            <person name="da Silva A.C.R."/>
            <person name="Ferro J.A."/>
            <person name="Reinach F.C."/>
            <person name="Farah C.S."/>
            <person name="Furlan L.R."/>
            <person name="Quaggio R.B."/>
            <person name="Monteiro-Vitorello C.B."/>
            <person name="Van Sluys M.A."/>
            <person name="Almeida N.F. Jr."/>
            <person name="Alves L.M.C."/>
            <person name="do Amaral A.M."/>
            <person name="Bertolini M.C."/>
            <person name="Camargo L.E.A."/>
            <person name="Camarotte G."/>
            <person name="Cannavan F."/>
            <person name="Cardozo J."/>
            <person name="Chambergo F."/>
            <person name="Ciapina L.P."/>
            <person name="Cicarelli R.M.B."/>
            <person name="Coutinho L.L."/>
            <person name="Cursino-Santos J.R."/>
            <person name="El-Dorry H."/>
            <person name="Faria J.B."/>
            <person name="Ferreira A.J.S."/>
            <person name="Ferreira R.C.C."/>
            <person name="Ferro M.I.T."/>
            <person name="Formighieri E.F."/>
            <person name="Franco M.C."/>
            <person name="Greggio C.C."/>
            <person name="Gruber A."/>
            <person name="Katsuyama A.M."/>
            <person name="Kishi L.T."/>
            <person name="Leite R.P."/>
            <person name="Lemos E.G.M."/>
            <person name="Lemos M.V.F."/>
            <person name="Locali E.C."/>
            <person name="Machado M.A."/>
            <person name="Madeira A.M.B.N."/>
            <person name="Martinez-Rossi N.M."/>
            <person name="Martins E.C."/>
            <person name="Meidanis J."/>
            <person name="Menck C.F.M."/>
            <person name="Miyaki C.Y."/>
            <person name="Moon D.H."/>
            <person name="Moreira L.M."/>
            <person name="Novo M.T.M."/>
            <person name="Okura V.K."/>
            <person name="Oliveira M.C."/>
            <person name="Oliveira V.R."/>
            <person name="Pereira H.A."/>
            <person name="Rossi A."/>
            <person name="Sena J.A.D."/>
            <person name="Silva C."/>
            <person name="de Souza R.F."/>
            <person name="Spinola L.A.F."/>
            <person name="Takita M.A."/>
            <person name="Tamura R.E."/>
            <person name="Teixeira E.C."/>
            <person name="Tezza R.I.D."/>
            <person name="Trindade dos Santos M."/>
            <person name="Truffi D."/>
            <person name="Tsai S.M."/>
            <person name="White F.F."/>
            <person name="Setubal J.C."/>
            <person name="Kitajima J.P."/>
        </authorList>
    </citation>
    <scope>NUCLEOTIDE SEQUENCE [LARGE SCALE GENOMIC DNA]</scope>
    <source>
        <strain>306</strain>
    </source>
</reference>
<keyword id="KW-0997">Cell inner membrane</keyword>
<keyword id="KW-1003">Cell membrane</keyword>
<keyword id="KW-0472">Membrane</keyword>
<keyword id="KW-0520">NAD</keyword>
<keyword id="KW-0874">Quinone</keyword>
<keyword id="KW-1278">Translocase</keyword>
<keyword id="KW-0812">Transmembrane</keyword>
<keyword id="KW-1133">Transmembrane helix</keyword>
<keyword id="KW-0813">Transport</keyword>
<keyword id="KW-0830">Ubiquinone</keyword>
<accession>Q8NL19</accession>
<comment type="function">
    <text evidence="1">NDH-1 shuttles electrons from NADH, via FMN and iron-sulfur (Fe-S) centers, to quinones in the respiratory chain. The immediate electron acceptor for the enzyme in this species is believed to be ubiquinone. Couples the redox reaction to proton translocation (for every two electrons transferred, four hydrogen ions are translocated across the cytoplasmic membrane), and thus conserves the redox energy in a proton gradient.</text>
</comment>
<comment type="catalytic activity">
    <reaction evidence="1">
        <text>a quinone + NADH + 5 H(+)(in) = a quinol + NAD(+) + 4 H(+)(out)</text>
        <dbReference type="Rhea" id="RHEA:57888"/>
        <dbReference type="ChEBI" id="CHEBI:15378"/>
        <dbReference type="ChEBI" id="CHEBI:24646"/>
        <dbReference type="ChEBI" id="CHEBI:57540"/>
        <dbReference type="ChEBI" id="CHEBI:57945"/>
        <dbReference type="ChEBI" id="CHEBI:132124"/>
    </reaction>
</comment>
<comment type="subunit">
    <text evidence="1">NDH-1 is composed of 14 different subunits. Subunits NuoA, H, J, K, L, M, N constitute the membrane sector of the complex.</text>
</comment>
<comment type="subcellular location">
    <subcellularLocation>
        <location evidence="1">Cell inner membrane</location>
        <topology evidence="1">Multi-pass membrane protein</topology>
    </subcellularLocation>
</comment>
<comment type="similarity">
    <text evidence="1">Belongs to the complex I subunit 4L family.</text>
</comment>
<dbReference type="EC" id="7.1.1.-" evidence="1"/>
<dbReference type="EMBL" id="AE008923">
    <property type="protein sequence ID" value="AAM37540.1"/>
    <property type="molecule type" value="Genomic_DNA"/>
</dbReference>
<dbReference type="RefSeq" id="WP_005914274.1">
    <property type="nucleotide sequence ID" value="NC_003919.1"/>
</dbReference>
<dbReference type="SMR" id="Q8NL19"/>
<dbReference type="GeneID" id="97510981"/>
<dbReference type="KEGG" id="xac:XAC2694"/>
<dbReference type="eggNOG" id="COG0713">
    <property type="taxonomic scope" value="Bacteria"/>
</dbReference>
<dbReference type="HOGENOM" id="CLU_144724_2_0_6"/>
<dbReference type="Proteomes" id="UP000000576">
    <property type="component" value="Chromosome"/>
</dbReference>
<dbReference type="GO" id="GO:0030964">
    <property type="term" value="C:NADH dehydrogenase complex"/>
    <property type="evidence" value="ECO:0007669"/>
    <property type="project" value="TreeGrafter"/>
</dbReference>
<dbReference type="GO" id="GO:0005886">
    <property type="term" value="C:plasma membrane"/>
    <property type="evidence" value="ECO:0007669"/>
    <property type="project" value="UniProtKB-SubCell"/>
</dbReference>
<dbReference type="GO" id="GO:0050136">
    <property type="term" value="F:NADH:ubiquinone reductase (non-electrogenic) activity"/>
    <property type="evidence" value="ECO:0007669"/>
    <property type="project" value="UniProtKB-UniRule"/>
</dbReference>
<dbReference type="GO" id="GO:0048038">
    <property type="term" value="F:quinone binding"/>
    <property type="evidence" value="ECO:0007669"/>
    <property type="project" value="UniProtKB-KW"/>
</dbReference>
<dbReference type="GO" id="GO:0042773">
    <property type="term" value="P:ATP synthesis coupled electron transport"/>
    <property type="evidence" value="ECO:0007669"/>
    <property type="project" value="InterPro"/>
</dbReference>
<dbReference type="FunFam" id="1.10.287.3510:FF:000001">
    <property type="entry name" value="NADH-quinone oxidoreductase subunit K"/>
    <property type="match status" value="1"/>
</dbReference>
<dbReference type="Gene3D" id="1.10.287.3510">
    <property type="match status" value="1"/>
</dbReference>
<dbReference type="HAMAP" id="MF_01456">
    <property type="entry name" value="NDH1_NuoK"/>
    <property type="match status" value="1"/>
</dbReference>
<dbReference type="InterPro" id="IPR001133">
    <property type="entry name" value="NADH_UbQ_OxRdtase_chain4L/K"/>
</dbReference>
<dbReference type="InterPro" id="IPR039428">
    <property type="entry name" value="NUOK/Mnh_C1-like"/>
</dbReference>
<dbReference type="NCBIfam" id="NF004320">
    <property type="entry name" value="PRK05715.1-2"/>
    <property type="match status" value="1"/>
</dbReference>
<dbReference type="NCBIfam" id="NF004321">
    <property type="entry name" value="PRK05715.1-3"/>
    <property type="match status" value="1"/>
</dbReference>
<dbReference type="NCBIfam" id="NF004323">
    <property type="entry name" value="PRK05715.1-5"/>
    <property type="match status" value="1"/>
</dbReference>
<dbReference type="PANTHER" id="PTHR11434:SF21">
    <property type="entry name" value="NADH DEHYDROGENASE SUBUNIT 4L-RELATED"/>
    <property type="match status" value="1"/>
</dbReference>
<dbReference type="PANTHER" id="PTHR11434">
    <property type="entry name" value="NADH-UBIQUINONE OXIDOREDUCTASE SUBUNIT ND4L"/>
    <property type="match status" value="1"/>
</dbReference>
<dbReference type="Pfam" id="PF00420">
    <property type="entry name" value="Oxidored_q2"/>
    <property type="match status" value="1"/>
</dbReference>
<proteinExistence type="inferred from homology"/>
<name>NUOK_XANAC</name>
<sequence>MITLGHLLGLGAVLFCISLAGIFLNRKNVIVLLMSIELMLLSVNVNFIAFSRELGDTAGQLFVFFILTVAAAEAAIGLAILVTLFRTRRTINVAEVDTLKG</sequence>
<protein>
    <recommendedName>
        <fullName evidence="1">NADH-quinone oxidoreductase subunit K</fullName>
        <ecNumber evidence="1">7.1.1.-</ecNumber>
    </recommendedName>
    <alternativeName>
        <fullName evidence="1">NADH dehydrogenase I subunit K</fullName>
    </alternativeName>
    <alternativeName>
        <fullName evidence="1">NDH-1 subunit K</fullName>
    </alternativeName>
</protein>
<evidence type="ECO:0000255" key="1">
    <source>
        <dbReference type="HAMAP-Rule" id="MF_01456"/>
    </source>
</evidence>
<gene>
    <name evidence="1" type="primary">nuoK</name>
    <name type="ordered locus">XAC2694</name>
</gene>
<organism>
    <name type="scientific">Xanthomonas axonopodis pv. citri (strain 306)</name>
    <dbReference type="NCBI Taxonomy" id="190486"/>
    <lineage>
        <taxon>Bacteria</taxon>
        <taxon>Pseudomonadati</taxon>
        <taxon>Pseudomonadota</taxon>
        <taxon>Gammaproteobacteria</taxon>
        <taxon>Lysobacterales</taxon>
        <taxon>Lysobacteraceae</taxon>
        <taxon>Xanthomonas</taxon>
    </lineage>
</organism>